<accession>Q3UME2</accession>
<accession>Q8BQ16</accession>
<accession>Q8CAM4</accession>
<accession>Q8CAM9</accession>
<accession>Q8CD42</accession>
<gene>
    <name type="primary">Tmem241</name>
</gene>
<sequence length="297" mass="32965">MNVRRSLLGLTFCTCYLASHLTNKYVLSVLKFTYPTLFQGWQTFIGGLLLHMSWKLGWVELHSSPRSDVLIWLPASALFVGIIYAGSKALSRLAVPVFFILHNVAEVLTCGYQKCVWKEKTSLSKICSALFLLAAAGCLPFQDSQFDPDGYFWALIHIFCVGSYKILRKSRKPTVLSDIDQQYLNYIFSMVLLAFASHPTGDLFGALDFPFLYFYRFHGSCCASGVLGFFLMLSTVRLRSILAPGQCAAWILCAKVVTAGLSMLLFDMALTKATVGCFLLGGLGEALLVFSERRSSS</sequence>
<dbReference type="EMBL" id="AK031517">
    <property type="protein sequence ID" value="BAC27431.1"/>
    <property type="molecule type" value="mRNA"/>
</dbReference>
<dbReference type="EMBL" id="AK038419">
    <property type="protein sequence ID" value="BAC29994.1"/>
    <property type="molecule type" value="mRNA"/>
</dbReference>
<dbReference type="EMBL" id="AK038472">
    <property type="protein sequence ID" value="BAC30011.1"/>
    <property type="status" value="ALT_FRAME"/>
    <property type="molecule type" value="mRNA"/>
</dbReference>
<dbReference type="EMBL" id="AK051727">
    <property type="protein sequence ID" value="BAC34738.1"/>
    <property type="molecule type" value="mRNA"/>
</dbReference>
<dbReference type="EMBL" id="AK144963">
    <property type="protein sequence ID" value="BAE26156.1"/>
    <property type="molecule type" value="mRNA"/>
</dbReference>
<dbReference type="EMBL" id="BC094382">
    <property type="protein sequence ID" value="AAH94382.1"/>
    <property type="molecule type" value="mRNA"/>
</dbReference>
<dbReference type="CCDS" id="CCDS84358.1">
    <molecule id="Q3UME2-1"/>
</dbReference>
<dbReference type="CCDS" id="CCDS84359.1">
    <molecule id="Q3UME2-2"/>
</dbReference>
<dbReference type="RefSeq" id="NP_001276595.1">
    <molecule id="Q3UME2-1"/>
    <property type="nucleotide sequence ID" value="NM_001289666.1"/>
</dbReference>
<dbReference type="RefSeq" id="NP_001276596.1">
    <property type="nucleotide sequence ID" value="NM_001289667.1"/>
</dbReference>
<dbReference type="RefSeq" id="NP_848916.2">
    <molecule id="Q3UME2-2"/>
    <property type="nucleotide sequence ID" value="NM_178801.5"/>
</dbReference>
<dbReference type="SMR" id="Q3UME2"/>
<dbReference type="FunCoup" id="Q3UME2">
    <property type="interactions" value="848"/>
</dbReference>
<dbReference type="STRING" id="10090.ENSMUSP00000147687"/>
<dbReference type="PhosphoSitePlus" id="Q3UME2"/>
<dbReference type="PaxDb" id="10090-ENSMUSP00000052001"/>
<dbReference type="Antibodypedia" id="54177">
    <property type="antibodies" value="26 antibodies from 11 providers"/>
</dbReference>
<dbReference type="DNASU" id="338363"/>
<dbReference type="Ensembl" id="ENSMUST00000055447.14">
    <molecule id="Q3UME2-2"/>
    <property type="protein sequence ID" value="ENSMUSP00000052001.8"/>
    <property type="gene ID" value="ENSMUSG00000049411.16"/>
</dbReference>
<dbReference type="Ensembl" id="ENSMUST00000092075.5">
    <molecule id="Q3UME2-3"/>
    <property type="protein sequence ID" value="ENSMUSP00000089709.5"/>
    <property type="gene ID" value="ENSMUSG00000049411.16"/>
</dbReference>
<dbReference type="Ensembl" id="ENSMUST00000209859.2">
    <molecule id="Q3UME2-1"/>
    <property type="protein sequence ID" value="ENSMUSP00000147687.2"/>
    <property type="gene ID" value="ENSMUSG00000049411.16"/>
</dbReference>
<dbReference type="Ensembl" id="ENSMUST00000211298.2">
    <molecule id="Q3UME2-3"/>
    <property type="protein sequence ID" value="ENSMUSP00000147954.2"/>
    <property type="gene ID" value="ENSMUSG00000049411.16"/>
</dbReference>
<dbReference type="GeneID" id="338363"/>
<dbReference type="KEGG" id="mmu:338363"/>
<dbReference type="UCSC" id="uc008ebv.3">
    <molecule id="Q3UME2-1"/>
    <property type="organism name" value="mouse"/>
</dbReference>
<dbReference type="UCSC" id="uc008ebw.2">
    <molecule id="Q3UME2-2"/>
    <property type="organism name" value="mouse"/>
</dbReference>
<dbReference type="UCSC" id="uc008ebx.2">
    <molecule id="Q3UME2-4"/>
    <property type="organism name" value="mouse"/>
</dbReference>
<dbReference type="AGR" id="MGI:2442435"/>
<dbReference type="CTD" id="85019"/>
<dbReference type="MGI" id="MGI:2442435">
    <property type="gene designation" value="Tmem241"/>
</dbReference>
<dbReference type="VEuPathDB" id="HostDB:ENSMUSG00000049411"/>
<dbReference type="eggNOG" id="KOG1444">
    <property type="taxonomic scope" value="Eukaryota"/>
</dbReference>
<dbReference type="GeneTree" id="ENSGT00510000048348"/>
<dbReference type="InParanoid" id="Q3UME2"/>
<dbReference type="OMA" id="WAIIHLF"/>
<dbReference type="OrthoDB" id="417037at2759"/>
<dbReference type="PhylomeDB" id="Q3UME2"/>
<dbReference type="BioGRID-ORCS" id="338363">
    <property type="hits" value="1 hit in 41 CRISPR screens"/>
</dbReference>
<dbReference type="ChiTaRS" id="Tmem241">
    <property type="organism name" value="mouse"/>
</dbReference>
<dbReference type="PRO" id="PR:Q3UME2"/>
<dbReference type="Proteomes" id="UP000000589">
    <property type="component" value="Chromosome 18"/>
</dbReference>
<dbReference type="RNAct" id="Q3UME2">
    <property type="molecule type" value="protein"/>
</dbReference>
<dbReference type="Bgee" id="ENSMUSG00000049411">
    <property type="expression patterns" value="Expressed in animal zygote and 161 other cell types or tissues"/>
</dbReference>
<dbReference type="ExpressionAtlas" id="Q3UME2">
    <property type="expression patterns" value="baseline and differential"/>
</dbReference>
<dbReference type="GO" id="GO:0005794">
    <property type="term" value="C:Golgi apparatus"/>
    <property type="evidence" value="ECO:0000250"/>
    <property type="project" value="UniProtKB"/>
</dbReference>
<dbReference type="GO" id="GO:0016020">
    <property type="term" value="C:membrane"/>
    <property type="evidence" value="ECO:0007669"/>
    <property type="project" value="UniProtKB-KW"/>
</dbReference>
<dbReference type="GO" id="GO:0005462">
    <property type="term" value="F:UDP-N-acetylglucosamine transmembrane transporter activity"/>
    <property type="evidence" value="ECO:0000250"/>
    <property type="project" value="UniProtKB"/>
</dbReference>
<dbReference type="GO" id="GO:1990569">
    <property type="term" value="P:UDP-N-acetylglucosamine transmembrane transport"/>
    <property type="evidence" value="ECO:0000250"/>
    <property type="project" value="UniProtKB"/>
</dbReference>
<dbReference type="InterPro" id="IPR050186">
    <property type="entry name" value="TPT_transporter"/>
</dbReference>
<dbReference type="PANTHER" id="PTHR11132">
    <property type="entry name" value="SOLUTE CARRIER FAMILY 35"/>
    <property type="match status" value="1"/>
</dbReference>
<comment type="function">
    <text evidence="1">Golgi-localized UDP-N-acetylglucosamine (UDP-GlcNAc) transporter that transports UDP-N-acetylglucosamine into Golgi lumen. Contributes to lysosomal targeting of NPC2, a key protein required for lysosomal cholesterol exiting, and that utilizes the mannose-6-phosphate (M6P) modification pathway for its lysosomal targeting.</text>
</comment>
<comment type="subcellular location">
    <subcellularLocation>
        <location evidence="1">Golgi apparatus</location>
        <location evidence="1">cis-Golgi network membrane</location>
        <topology evidence="2">Multi-pass membrane protein</topology>
    </subcellularLocation>
</comment>
<comment type="alternative products">
    <event type="alternative splicing"/>
    <isoform>
        <id>Q3UME2-1</id>
        <name>1</name>
        <sequence type="displayed"/>
    </isoform>
    <isoform>
        <id>Q3UME2-2</id>
        <name>2</name>
        <sequence type="described" ref="VSP_028714"/>
    </isoform>
    <isoform>
        <id>Q3UME2-3</id>
        <name>3</name>
        <sequence type="described" ref="VSP_028710 VSP_028713"/>
    </isoform>
    <isoform>
        <id>Q3UME2-4</id>
        <name>4</name>
        <sequence type="described" ref="VSP_028709 VSP_028711 VSP_028712"/>
    </isoform>
</comment>
<comment type="tissue specificity">
    <text evidence="3">Widely expressed with high expression in lung.</text>
</comment>
<comment type="disruption phenotype">
    <text evidence="3">Deficient mice are grossly normal and show similar body weight, total cholesterol in serum and triglyceride in serum with wild-type mice. However, Tmem241 ablation causes ectopic cholesterol accumulation in lung cells, lung inflammatory infiltration and hypokinesia.</text>
</comment>
<comment type="similarity">
    <text evidence="6">Belongs to the nucleotide-sugar transporter family. SLC35A subfamily.</text>
</comment>
<comment type="sequence caution" evidence="6">
    <conflict type="frameshift">
        <sequence resource="EMBL-CDS" id="BAC30011"/>
    </conflict>
</comment>
<proteinExistence type="evidence at transcript level"/>
<feature type="chain" id="PRO_0000307317" description="UDP-N-acetylglucosamine transporter TMEM241">
    <location>
        <begin position="1"/>
        <end position="297"/>
    </location>
</feature>
<feature type="transmembrane region" description="Helical" evidence="2">
    <location>
        <begin position="7"/>
        <end position="29"/>
    </location>
</feature>
<feature type="transmembrane region" description="Helical" evidence="2">
    <location>
        <begin position="32"/>
        <end position="52"/>
    </location>
</feature>
<feature type="transmembrane region" description="Helical" evidence="2">
    <location>
        <begin position="69"/>
        <end position="89"/>
    </location>
</feature>
<feature type="transmembrane region" description="Helical" evidence="2">
    <location>
        <begin position="93"/>
        <end position="113"/>
    </location>
</feature>
<feature type="transmembrane region" description="Helical" evidence="2">
    <location>
        <begin position="121"/>
        <end position="141"/>
    </location>
</feature>
<feature type="transmembrane region" description="Helical" evidence="2">
    <location>
        <begin position="146"/>
        <end position="166"/>
    </location>
</feature>
<feature type="transmembrane region" description="Helical" evidence="2">
    <location>
        <begin position="187"/>
        <end position="207"/>
    </location>
</feature>
<feature type="transmembrane region" description="Helical" evidence="2">
    <location>
        <begin position="211"/>
        <end position="231"/>
    </location>
</feature>
<feature type="transmembrane region" description="Helical" evidence="2">
    <location>
        <begin position="250"/>
        <end position="270"/>
    </location>
</feature>
<feature type="transmembrane region" description="Helical" evidence="2">
    <location>
        <begin position="271"/>
        <end position="291"/>
    </location>
</feature>
<feature type="splice variant" id="VSP_028709" description="In isoform 4." evidence="5">
    <original>P</original>
    <variation>PSALSDSARMADHQAPRILLSPQCWDYRCALPHPDSPWVLGILLRSPSLHI</variation>
    <location>
        <position position="65"/>
    </location>
</feature>
<feature type="splice variant" id="VSP_028710" description="In isoform 3." evidence="5">
    <original>SDIDQQYLNYIF</original>
    <variation>RGPACWGLPLPS</variation>
    <location>
        <begin position="177"/>
        <end position="188"/>
    </location>
</feature>
<feature type="splice variant" id="VSP_028711" description="In isoform 4." evidence="5">
    <original>S</original>
    <variation>R</variation>
    <location>
        <position position="177"/>
    </location>
</feature>
<feature type="splice variant" id="VSP_028712" description="In isoform 4." evidence="5">
    <location>
        <begin position="178"/>
        <end position="297"/>
    </location>
</feature>
<feature type="splice variant" id="VSP_028713" description="In isoform 3." evidence="5">
    <location>
        <begin position="189"/>
        <end position="297"/>
    </location>
</feature>
<feature type="splice variant" id="VSP_028714" description="In isoform 2." evidence="4 5">
    <original>CFLLGGLGEALLVFSERRSSS</original>
    <variation>WCQPAG</variation>
    <location>
        <begin position="277"/>
        <end position="297"/>
    </location>
</feature>
<feature type="sequence conflict" description="In Ref. 1; BAE26156." evidence="6" ref="1">
    <original>I</original>
    <variation>M</variation>
    <location>
        <position position="71"/>
    </location>
</feature>
<feature type="sequence conflict" description="In Ref. 1; BAE26156." evidence="6" ref="1">
    <original>A</original>
    <variation>S</variation>
    <location>
        <position position="85"/>
    </location>
</feature>
<keyword id="KW-0025">Alternative splicing</keyword>
<keyword id="KW-0333">Golgi apparatus</keyword>
<keyword id="KW-0472">Membrane</keyword>
<keyword id="KW-1185">Reference proteome</keyword>
<keyword id="KW-0762">Sugar transport</keyword>
<keyword id="KW-0812">Transmembrane</keyword>
<keyword id="KW-1133">Transmembrane helix</keyword>
<keyword id="KW-0813">Transport</keyword>
<name>TM241_MOUSE</name>
<evidence type="ECO:0000250" key="1">
    <source>
        <dbReference type="UniProtKB" id="Q24JQ0"/>
    </source>
</evidence>
<evidence type="ECO:0000255" key="2"/>
<evidence type="ECO:0000269" key="3">
    <source>
    </source>
</evidence>
<evidence type="ECO:0000303" key="4">
    <source>
    </source>
</evidence>
<evidence type="ECO:0000303" key="5">
    <source>
    </source>
</evidence>
<evidence type="ECO:0000305" key="6"/>
<reference key="1">
    <citation type="journal article" date="2005" name="Science">
        <title>The transcriptional landscape of the mammalian genome.</title>
        <authorList>
            <person name="Carninci P."/>
            <person name="Kasukawa T."/>
            <person name="Katayama S."/>
            <person name="Gough J."/>
            <person name="Frith M.C."/>
            <person name="Maeda N."/>
            <person name="Oyama R."/>
            <person name="Ravasi T."/>
            <person name="Lenhard B."/>
            <person name="Wells C."/>
            <person name="Kodzius R."/>
            <person name="Shimokawa K."/>
            <person name="Bajic V.B."/>
            <person name="Brenner S.E."/>
            <person name="Batalov S."/>
            <person name="Forrest A.R."/>
            <person name="Zavolan M."/>
            <person name="Davis M.J."/>
            <person name="Wilming L.G."/>
            <person name="Aidinis V."/>
            <person name="Allen J.E."/>
            <person name="Ambesi-Impiombato A."/>
            <person name="Apweiler R."/>
            <person name="Aturaliya R.N."/>
            <person name="Bailey T.L."/>
            <person name="Bansal M."/>
            <person name="Baxter L."/>
            <person name="Beisel K.W."/>
            <person name="Bersano T."/>
            <person name="Bono H."/>
            <person name="Chalk A.M."/>
            <person name="Chiu K.P."/>
            <person name="Choudhary V."/>
            <person name="Christoffels A."/>
            <person name="Clutterbuck D.R."/>
            <person name="Crowe M.L."/>
            <person name="Dalla E."/>
            <person name="Dalrymple B.P."/>
            <person name="de Bono B."/>
            <person name="Della Gatta G."/>
            <person name="di Bernardo D."/>
            <person name="Down T."/>
            <person name="Engstrom P."/>
            <person name="Fagiolini M."/>
            <person name="Faulkner G."/>
            <person name="Fletcher C.F."/>
            <person name="Fukushima T."/>
            <person name="Furuno M."/>
            <person name="Futaki S."/>
            <person name="Gariboldi M."/>
            <person name="Georgii-Hemming P."/>
            <person name="Gingeras T.R."/>
            <person name="Gojobori T."/>
            <person name="Green R.E."/>
            <person name="Gustincich S."/>
            <person name="Harbers M."/>
            <person name="Hayashi Y."/>
            <person name="Hensch T.K."/>
            <person name="Hirokawa N."/>
            <person name="Hill D."/>
            <person name="Huminiecki L."/>
            <person name="Iacono M."/>
            <person name="Ikeo K."/>
            <person name="Iwama A."/>
            <person name="Ishikawa T."/>
            <person name="Jakt M."/>
            <person name="Kanapin A."/>
            <person name="Katoh M."/>
            <person name="Kawasawa Y."/>
            <person name="Kelso J."/>
            <person name="Kitamura H."/>
            <person name="Kitano H."/>
            <person name="Kollias G."/>
            <person name="Krishnan S.P."/>
            <person name="Kruger A."/>
            <person name="Kummerfeld S.K."/>
            <person name="Kurochkin I.V."/>
            <person name="Lareau L.F."/>
            <person name="Lazarevic D."/>
            <person name="Lipovich L."/>
            <person name="Liu J."/>
            <person name="Liuni S."/>
            <person name="McWilliam S."/>
            <person name="Madan Babu M."/>
            <person name="Madera M."/>
            <person name="Marchionni L."/>
            <person name="Matsuda H."/>
            <person name="Matsuzawa S."/>
            <person name="Miki H."/>
            <person name="Mignone F."/>
            <person name="Miyake S."/>
            <person name="Morris K."/>
            <person name="Mottagui-Tabar S."/>
            <person name="Mulder N."/>
            <person name="Nakano N."/>
            <person name="Nakauchi H."/>
            <person name="Ng P."/>
            <person name="Nilsson R."/>
            <person name="Nishiguchi S."/>
            <person name="Nishikawa S."/>
            <person name="Nori F."/>
            <person name="Ohara O."/>
            <person name="Okazaki Y."/>
            <person name="Orlando V."/>
            <person name="Pang K.C."/>
            <person name="Pavan W.J."/>
            <person name="Pavesi G."/>
            <person name="Pesole G."/>
            <person name="Petrovsky N."/>
            <person name="Piazza S."/>
            <person name="Reed J."/>
            <person name="Reid J.F."/>
            <person name="Ring B.Z."/>
            <person name="Ringwald M."/>
            <person name="Rost B."/>
            <person name="Ruan Y."/>
            <person name="Salzberg S.L."/>
            <person name="Sandelin A."/>
            <person name="Schneider C."/>
            <person name="Schoenbach C."/>
            <person name="Sekiguchi K."/>
            <person name="Semple C.A."/>
            <person name="Seno S."/>
            <person name="Sessa L."/>
            <person name="Sheng Y."/>
            <person name="Shibata Y."/>
            <person name="Shimada H."/>
            <person name="Shimada K."/>
            <person name="Silva D."/>
            <person name="Sinclair B."/>
            <person name="Sperling S."/>
            <person name="Stupka E."/>
            <person name="Sugiura K."/>
            <person name="Sultana R."/>
            <person name="Takenaka Y."/>
            <person name="Taki K."/>
            <person name="Tammoja K."/>
            <person name="Tan S.L."/>
            <person name="Tang S."/>
            <person name="Taylor M.S."/>
            <person name="Tegner J."/>
            <person name="Teichmann S.A."/>
            <person name="Ueda H.R."/>
            <person name="van Nimwegen E."/>
            <person name="Verardo R."/>
            <person name="Wei C.L."/>
            <person name="Yagi K."/>
            <person name="Yamanishi H."/>
            <person name="Zabarovsky E."/>
            <person name="Zhu S."/>
            <person name="Zimmer A."/>
            <person name="Hide W."/>
            <person name="Bult C."/>
            <person name="Grimmond S.M."/>
            <person name="Teasdale R.D."/>
            <person name="Liu E.T."/>
            <person name="Brusic V."/>
            <person name="Quackenbush J."/>
            <person name="Wahlestedt C."/>
            <person name="Mattick J.S."/>
            <person name="Hume D.A."/>
            <person name="Kai C."/>
            <person name="Sasaki D."/>
            <person name="Tomaru Y."/>
            <person name="Fukuda S."/>
            <person name="Kanamori-Katayama M."/>
            <person name="Suzuki M."/>
            <person name="Aoki J."/>
            <person name="Arakawa T."/>
            <person name="Iida J."/>
            <person name="Imamura K."/>
            <person name="Itoh M."/>
            <person name="Kato T."/>
            <person name="Kawaji H."/>
            <person name="Kawagashira N."/>
            <person name="Kawashima T."/>
            <person name="Kojima M."/>
            <person name="Kondo S."/>
            <person name="Konno H."/>
            <person name="Nakano K."/>
            <person name="Ninomiya N."/>
            <person name="Nishio T."/>
            <person name="Okada M."/>
            <person name="Plessy C."/>
            <person name="Shibata K."/>
            <person name="Shiraki T."/>
            <person name="Suzuki S."/>
            <person name="Tagami M."/>
            <person name="Waki K."/>
            <person name="Watahiki A."/>
            <person name="Okamura-Oho Y."/>
            <person name="Suzuki H."/>
            <person name="Kawai J."/>
            <person name="Hayashizaki Y."/>
        </authorList>
    </citation>
    <scope>NUCLEOTIDE SEQUENCE [LARGE SCALE MRNA] (ISOFORMS 1; 2; 3 AND 4)</scope>
    <source>
        <strain>C57BL/6J</strain>
        <tissue>Hypothalamus</tissue>
        <tissue>Mammary gland</tissue>
        <tissue>Spinal ganglion</tissue>
        <tissue>Testis</tissue>
    </source>
</reference>
<reference key="2">
    <citation type="journal article" date="2004" name="Genome Res.">
        <title>The status, quality, and expansion of the NIH full-length cDNA project: the Mammalian Gene Collection (MGC).</title>
        <authorList>
            <consortium name="The MGC Project Team"/>
        </authorList>
    </citation>
    <scope>NUCLEOTIDE SEQUENCE [LARGE SCALE MRNA] (ISOFORM 2)</scope>
    <source>
        <strain>C57BL/6J</strain>
        <tissue>Eye</tissue>
    </source>
</reference>
<reference key="3">
    <citation type="journal article" date="2023" name="J. Lipid Res.">
        <title>TMEM241 is a UDP-N-acetylglucosamine transporter required for M6P modification of NPC2 and cholesterol transport.</title>
        <authorList>
            <person name="Zhao N."/>
            <person name="Deng G."/>
            <person name="Yuan P.X."/>
            <person name="Zhang Y.F."/>
            <person name="Jiang L.Y."/>
            <person name="Zhao X."/>
            <person name="Song B.L."/>
        </authorList>
    </citation>
    <scope>DISRUPTION PHENOTYPE</scope>
    <scope>TISSUE SPECIFICITY</scope>
</reference>
<protein>
    <recommendedName>
        <fullName>UDP-N-acetylglucosamine transporter TMEM241</fullName>
    </recommendedName>
    <alternativeName>
        <fullName>Transmembrane protein 241</fullName>
    </alternativeName>
</protein>
<organism>
    <name type="scientific">Mus musculus</name>
    <name type="common">Mouse</name>
    <dbReference type="NCBI Taxonomy" id="10090"/>
    <lineage>
        <taxon>Eukaryota</taxon>
        <taxon>Metazoa</taxon>
        <taxon>Chordata</taxon>
        <taxon>Craniata</taxon>
        <taxon>Vertebrata</taxon>
        <taxon>Euteleostomi</taxon>
        <taxon>Mammalia</taxon>
        <taxon>Eutheria</taxon>
        <taxon>Euarchontoglires</taxon>
        <taxon>Glires</taxon>
        <taxon>Rodentia</taxon>
        <taxon>Myomorpha</taxon>
        <taxon>Muroidea</taxon>
        <taxon>Muridae</taxon>
        <taxon>Murinae</taxon>
        <taxon>Mus</taxon>
        <taxon>Mus</taxon>
    </lineage>
</organism>